<gene>
    <name evidence="1" type="primary">zapD</name>
    <name type="ordered locus">YPDSF_2924</name>
</gene>
<evidence type="ECO:0000255" key="1">
    <source>
        <dbReference type="HAMAP-Rule" id="MF_01092"/>
    </source>
</evidence>
<feature type="chain" id="PRO_1000064933" description="Cell division protein ZapD">
    <location>
        <begin position="1"/>
        <end position="250"/>
    </location>
</feature>
<dbReference type="EMBL" id="CP000668">
    <property type="protein sequence ID" value="ABP41286.1"/>
    <property type="molecule type" value="Genomic_DNA"/>
</dbReference>
<dbReference type="RefSeq" id="WP_002209318.1">
    <property type="nucleotide sequence ID" value="NZ_CP009715.1"/>
</dbReference>
<dbReference type="SMR" id="A4TPS4"/>
<dbReference type="GeneID" id="57975279"/>
<dbReference type="KEGG" id="ypp:YPDSF_2924"/>
<dbReference type="PATRIC" id="fig|386656.14.peg.1443"/>
<dbReference type="GO" id="GO:0032153">
    <property type="term" value="C:cell division site"/>
    <property type="evidence" value="ECO:0007669"/>
    <property type="project" value="TreeGrafter"/>
</dbReference>
<dbReference type="GO" id="GO:0005737">
    <property type="term" value="C:cytoplasm"/>
    <property type="evidence" value="ECO:0007669"/>
    <property type="project" value="UniProtKB-SubCell"/>
</dbReference>
<dbReference type="GO" id="GO:0000917">
    <property type="term" value="P:division septum assembly"/>
    <property type="evidence" value="ECO:0007669"/>
    <property type="project" value="UniProtKB-KW"/>
</dbReference>
<dbReference type="GO" id="GO:0043093">
    <property type="term" value="P:FtsZ-dependent cytokinesis"/>
    <property type="evidence" value="ECO:0007669"/>
    <property type="project" value="UniProtKB-UniRule"/>
</dbReference>
<dbReference type="FunFam" id="1.10.3900.10:FF:000001">
    <property type="entry name" value="Cell division protein ZapD"/>
    <property type="match status" value="1"/>
</dbReference>
<dbReference type="FunFam" id="2.60.440.10:FF:000001">
    <property type="entry name" value="Cell division protein ZapD"/>
    <property type="match status" value="1"/>
</dbReference>
<dbReference type="Gene3D" id="1.10.3900.10">
    <property type="entry name" value="YacF-like"/>
    <property type="match status" value="1"/>
</dbReference>
<dbReference type="Gene3D" id="2.60.440.10">
    <property type="entry name" value="YacF-like domains"/>
    <property type="match status" value="1"/>
</dbReference>
<dbReference type="HAMAP" id="MF_01092">
    <property type="entry name" value="ZapD"/>
    <property type="match status" value="1"/>
</dbReference>
<dbReference type="InterPro" id="IPR009777">
    <property type="entry name" value="ZapD"/>
</dbReference>
<dbReference type="InterPro" id="IPR027462">
    <property type="entry name" value="ZapD_C"/>
</dbReference>
<dbReference type="InterPro" id="IPR036268">
    <property type="entry name" value="ZapD_sf"/>
</dbReference>
<dbReference type="NCBIfam" id="NF003653">
    <property type="entry name" value="PRK05287.1-1"/>
    <property type="match status" value="1"/>
</dbReference>
<dbReference type="NCBIfam" id="NF003655">
    <property type="entry name" value="PRK05287.1-3"/>
    <property type="match status" value="1"/>
</dbReference>
<dbReference type="PANTHER" id="PTHR39455">
    <property type="entry name" value="CELL DIVISION PROTEIN ZAPD"/>
    <property type="match status" value="1"/>
</dbReference>
<dbReference type="PANTHER" id="PTHR39455:SF1">
    <property type="entry name" value="CELL DIVISION PROTEIN ZAPD"/>
    <property type="match status" value="1"/>
</dbReference>
<dbReference type="Pfam" id="PF07072">
    <property type="entry name" value="ZapD"/>
    <property type="match status" value="1"/>
</dbReference>
<dbReference type="SUPFAM" id="SSF160950">
    <property type="entry name" value="YacF-like"/>
    <property type="match status" value="1"/>
</dbReference>
<accession>A4TPS4</accession>
<keyword id="KW-0131">Cell cycle</keyword>
<keyword id="KW-0132">Cell division</keyword>
<keyword id="KW-0963">Cytoplasm</keyword>
<keyword id="KW-0717">Septation</keyword>
<name>ZAPD_YERPP</name>
<protein>
    <recommendedName>
        <fullName evidence="1">Cell division protein ZapD</fullName>
    </recommendedName>
    <alternativeName>
        <fullName evidence="1">Z ring-associated protein D</fullName>
    </alternativeName>
</protein>
<proteinExistence type="inferred from homology"/>
<comment type="function">
    <text evidence="1">Cell division factor that enhances FtsZ-ring assembly. Directly interacts with FtsZ and promotes bundling of FtsZ protofilaments, with a reduction in FtsZ GTPase activity.</text>
</comment>
<comment type="subunit">
    <text evidence="1">Interacts with FtsZ.</text>
</comment>
<comment type="subcellular location">
    <subcellularLocation>
        <location evidence="1">Cytoplasm</location>
    </subcellularLocation>
    <text evidence="1">Localizes to mid-cell in an FtsZ-dependent manner.</text>
</comment>
<comment type="similarity">
    <text evidence="1">Belongs to the ZapD family.</text>
</comment>
<sequence length="250" mass="28427">MSDLTSTILFEHPLNEKMRTWLRMEFLLQQLESHRSLDNIANALTFFRTASDLIDVLERGEVRTDLLKELERQQQKLQQWADIPGVDVSLVDSLRNQLKSRAAVLMSAPRIGQSLKEDRLISVVRQRLSIPGGCCSFDLPTLHVWLHQPSEQRDQHINKLLASLAPLHQSLTIILDLIRQSCPLRSQISLNGFFQDNAGGADLLRLRLPLDPQLYPQISGHKTRYAIRFLALDSENGTVPARLSFELACC</sequence>
<organism>
    <name type="scientific">Yersinia pestis (strain Pestoides F)</name>
    <dbReference type="NCBI Taxonomy" id="386656"/>
    <lineage>
        <taxon>Bacteria</taxon>
        <taxon>Pseudomonadati</taxon>
        <taxon>Pseudomonadota</taxon>
        <taxon>Gammaproteobacteria</taxon>
        <taxon>Enterobacterales</taxon>
        <taxon>Yersiniaceae</taxon>
        <taxon>Yersinia</taxon>
    </lineage>
</organism>
<reference key="1">
    <citation type="submission" date="2007-02" db="EMBL/GenBank/DDBJ databases">
        <title>Complete sequence of chromosome of Yersinia pestis Pestoides F.</title>
        <authorList>
            <consortium name="US DOE Joint Genome Institute"/>
            <person name="Copeland A."/>
            <person name="Lucas S."/>
            <person name="Lapidus A."/>
            <person name="Barry K."/>
            <person name="Detter J.C."/>
            <person name="Glavina del Rio T."/>
            <person name="Hammon N."/>
            <person name="Israni S."/>
            <person name="Dalin E."/>
            <person name="Tice H."/>
            <person name="Pitluck S."/>
            <person name="Di Bartolo G."/>
            <person name="Chain P."/>
            <person name="Malfatti S."/>
            <person name="Shin M."/>
            <person name="Vergez L."/>
            <person name="Schmutz J."/>
            <person name="Larimer F."/>
            <person name="Land M."/>
            <person name="Hauser L."/>
            <person name="Worsham P."/>
            <person name="Chu M."/>
            <person name="Bearden S."/>
            <person name="Garcia E."/>
            <person name="Richardson P."/>
        </authorList>
    </citation>
    <scope>NUCLEOTIDE SEQUENCE [LARGE SCALE GENOMIC DNA]</scope>
    <source>
        <strain>Pestoides F</strain>
    </source>
</reference>